<keyword id="KW-1185">Reference proteome</keyword>
<proteinExistence type="evidence at protein level"/>
<name>Y088_MYCTU</name>
<gene>
    <name type="ordered locus">Rv0088</name>
    <name type="ORF">MTCY251.06</name>
</gene>
<organism>
    <name type="scientific">Mycobacterium tuberculosis (strain ATCC 25618 / H37Rv)</name>
    <dbReference type="NCBI Taxonomy" id="83332"/>
    <lineage>
        <taxon>Bacteria</taxon>
        <taxon>Bacillati</taxon>
        <taxon>Actinomycetota</taxon>
        <taxon>Actinomycetes</taxon>
        <taxon>Mycobacteriales</taxon>
        <taxon>Mycobacteriaceae</taxon>
        <taxon>Mycobacterium</taxon>
        <taxon>Mycobacterium tuberculosis complex</taxon>
    </lineage>
</organism>
<reference key="1">
    <citation type="journal article" date="1998" name="Nature">
        <title>Deciphering the biology of Mycobacterium tuberculosis from the complete genome sequence.</title>
        <authorList>
            <person name="Cole S.T."/>
            <person name="Brosch R."/>
            <person name="Parkhill J."/>
            <person name="Garnier T."/>
            <person name="Churcher C.M."/>
            <person name="Harris D.E."/>
            <person name="Gordon S.V."/>
            <person name="Eiglmeier K."/>
            <person name="Gas S."/>
            <person name="Barry C.E. III"/>
            <person name="Tekaia F."/>
            <person name="Badcock K."/>
            <person name="Basham D."/>
            <person name="Brown D."/>
            <person name="Chillingworth T."/>
            <person name="Connor R."/>
            <person name="Davies R.M."/>
            <person name="Devlin K."/>
            <person name="Feltwell T."/>
            <person name="Gentles S."/>
            <person name="Hamlin N."/>
            <person name="Holroyd S."/>
            <person name="Hornsby T."/>
            <person name="Jagels K."/>
            <person name="Krogh A."/>
            <person name="McLean J."/>
            <person name="Moule S."/>
            <person name="Murphy L.D."/>
            <person name="Oliver S."/>
            <person name="Osborne J."/>
            <person name="Quail M.A."/>
            <person name="Rajandream M.A."/>
            <person name="Rogers J."/>
            <person name="Rutter S."/>
            <person name="Seeger K."/>
            <person name="Skelton S."/>
            <person name="Squares S."/>
            <person name="Squares R."/>
            <person name="Sulston J.E."/>
            <person name="Taylor K."/>
            <person name="Whitehead S."/>
            <person name="Barrell B.G."/>
        </authorList>
    </citation>
    <scope>NUCLEOTIDE SEQUENCE [LARGE SCALE GENOMIC DNA]</scope>
    <source>
        <strain>ATCC 25618 / H37Rv</strain>
    </source>
</reference>
<reference key="2">
    <citation type="journal article" date="2011" name="Mol. Cell. Proteomics">
        <title>Proteogenomic analysis of Mycobacterium tuberculosis by high resolution mass spectrometry.</title>
        <authorList>
            <person name="Kelkar D.S."/>
            <person name="Kumar D."/>
            <person name="Kumar P."/>
            <person name="Balakrishnan L."/>
            <person name="Muthusamy B."/>
            <person name="Yadav A.K."/>
            <person name="Shrivastava P."/>
            <person name="Marimuthu A."/>
            <person name="Anand S."/>
            <person name="Sundaram H."/>
            <person name="Kingsbury R."/>
            <person name="Harsha H.C."/>
            <person name="Nair B."/>
            <person name="Prasad T.S."/>
            <person name="Chauhan D.S."/>
            <person name="Katoch K."/>
            <person name="Katoch V.M."/>
            <person name="Kumar P."/>
            <person name="Chaerkady R."/>
            <person name="Ramachandran S."/>
            <person name="Dash D."/>
            <person name="Pandey A."/>
        </authorList>
    </citation>
    <scope>IDENTIFICATION BY MASS SPECTROMETRY [LARGE SCALE ANALYSIS]</scope>
    <source>
        <strain>ATCC 25618 / H37Rv</strain>
    </source>
</reference>
<sequence>MSVYKHAPSRVRLRQTRSTVVKGRSGSLSWRRVRTGDLGLAVWGGREEYRAVKPGTPGIQPKGDMMTVTVVDAGPGRVSRSVEVAAPAAELFAIVADPRRHRELDGSGTVRGNIKVPAKLVVGSKFSTKMKLFGLPYRITSRVTALKPNELVEWSHPLGHRWRWEFESLSPTLTRVTETFDYHAAGAIKNGLKFYEMTGFAKSNAAGIEATLAKLSDQYARGRA</sequence>
<dbReference type="EMBL" id="AL123456">
    <property type="protein sequence ID" value="CCP42813.1"/>
    <property type="molecule type" value="Genomic_DNA"/>
</dbReference>
<dbReference type="PIR" id="H70749">
    <property type="entry name" value="H70749"/>
</dbReference>
<dbReference type="RefSeq" id="NP_214602.1">
    <property type="nucleotide sequence ID" value="NC_000962.3"/>
</dbReference>
<dbReference type="RefSeq" id="WP_003400664.1">
    <property type="nucleotide sequence ID" value="NC_000962.3"/>
</dbReference>
<dbReference type="SMR" id="P9WM73"/>
<dbReference type="STRING" id="83332.Rv0088"/>
<dbReference type="PaxDb" id="83332-Rv0088"/>
<dbReference type="DNASU" id="886954"/>
<dbReference type="GeneID" id="886954"/>
<dbReference type="KEGG" id="mtu:Rv0088"/>
<dbReference type="KEGG" id="mtv:RVBD_0088"/>
<dbReference type="PATRIC" id="fig|83332.111.peg.101"/>
<dbReference type="TubercuList" id="Rv0088"/>
<dbReference type="eggNOG" id="COG3832">
    <property type="taxonomic scope" value="Bacteria"/>
</dbReference>
<dbReference type="InParanoid" id="P9WM73"/>
<dbReference type="OrthoDB" id="6624781at2"/>
<dbReference type="Proteomes" id="UP000001584">
    <property type="component" value="Chromosome"/>
</dbReference>
<dbReference type="GO" id="GO:0009274">
    <property type="term" value="C:peptidoglycan-based cell wall"/>
    <property type="evidence" value="ECO:0007005"/>
    <property type="project" value="MTBBASE"/>
</dbReference>
<dbReference type="GO" id="GO:0005886">
    <property type="term" value="C:plasma membrane"/>
    <property type="evidence" value="ECO:0007005"/>
    <property type="project" value="MTBBASE"/>
</dbReference>
<dbReference type="CDD" id="cd07825">
    <property type="entry name" value="SRPBCC_7"/>
    <property type="match status" value="1"/>
</dbReference>
<dbReference type="FunFam" id="3.30.530.20:FF:000083">
    <property type="entry name" value="Uncharacterized protein MT0096"/>
    <property type="match status" value="1"/>
</dbReference>
<dbReference type="Gene3D" id="3.30.530.20">
    <property type="match status" value="1"/>
</dbReference>
<dbReference type="InterPro" id="IPR019587">
    <property type="entry name" value="Polyketide_cyclase/dehydratase"/>
</dbReference>
<dbReference type="InterPro" id="IPR023393">
    <property type="entry name" value="START-like_dom_sf"/>
</dbReference>
<dbReference type="Pfam" id="PF10604">
    <property type="entry name" value="Polyketide_cyc2"/>
    <property type="match status" value="1"/>
</dbReference>
<dbReference type="SUPFAM" id="SSF55961">
    <property type="entry name" value="Bet v1-like"/>
    <property type="match status" value="1"/>
</dbReference>
<protein>
    <recommendedName>
        <fullName>Uncharacterized protein Rv0088</fullName>
    </recommendedName>
</protein>
<feature type="chain" id="PRO_0000103662" description="Uncharacterized protein Rv0088">
    <location>
        <begin position="1"/>
        <end position="224"/>
    </location>
</feature>
<accession>P9WM73</accession>
<accession>L0T4A2</accession>
<accession>P0A5C3</accession>
<accession>Q10885</accession>